<reference key="1">
    <citation type="journal article" date="1996" name="Science">
        <title>Complete genome sequence of the methanogenic archaeon, Methanococcus jannaschii.</title>
        <authorList>
            <person name="Bult C.J."/>
            <person name="White O."/>
            <person name="Olsen G.J."/>
            <person name="Zhou L."/>
            <person name="Fleischmann R.D."/>
            <person name="Sutton G.G."/>
            <person name="Blake J.A."/>
            <person name="FitzGerald L.M."/>
            <person name="Clayton R.A."/>
            <person name="Gocayne J.D."/>
            <person name="Kerlavage A.R."/>
            <person name="Dougherty B.A."/>
            <person name="Tomb J.-F."/>
            <person name="Adams M.D."/>
            <person name="Reich C.I."/>
            <person name="Overbeek R."/>
            <person name="Kirkness E.F."/>
            <person name="Weinstock K.G."/>
            <person name="Merrick J.M."/>
            <person name="Glodek A."/>
            <person name="Scott J.L."/>
            <person name="Geoghagen N.S.M."/>
            <person name="Weidman J.F."/>
            <person name="Fuhrmann J.L."/>
            <person name="Nguyen D."/>
            <person name="Utterback T.R."/>
            <person name="Kelley J.M."/>
            <person name="Peterson J.D."/>
            <person name="Sadow P.W."/>
            <person name="Hanna M.C."/>
            <person name="Cotton M.D."/>
            <person name="Roberts K.M."/>
            <person name="Hurst M.A."/>
            <person name="Kaine B.P."/>
            <person name="Borodovsky M."/>
            <person name="Klenk H.-P."/>
            <person name="Fraser C.M."/>
            <person name="Smith H.O."/>
            <person name="Woese C.R."/>
            <person name="Venter J.C."/>
        </authorList>
    </citation>
    <scope>NUCLEOTIDE SEQUENCE [LARGE SCALE GENOMIC DNA]</scope>
    <source>
        <strain>ATCC 43067 / DSM 2661 / JAL-1 / JCM 10045 / NBRC 100440</strain>
    </source>
</reference>
<reference key="2">
    <citation type="journal article" date="2003" name="Extremophiles">
        <title>Isolation of a complete A1AO ATP synthase comprising nine subunits from the hyperthermophile Methanococcus jannaschii.</title>
        <authorList>
            <person name="Lingl A."/>
            <person name="Huber H."/>
            <person name="Stetter K.O."/>
            <person name="Mayer F."/>
            <person name="Kellermann J."/>
            <person name="Mueller V."/>
        </authorList>
    </citation>
    <scope>PROTEIN SEQUENCE OF 2-7</scope>
    <scope>FUNCTION</scope>
    <scope>BIOPHYSICOCHEMICAL PROPERTIES</scope>
    <scope>SUBUNIT</scope>
    <scope>SUBCELLULAR LOCATION</scope>
    <scope>DOMAIN</scope>
    <source>
        <strain>ATCC 43067 / DSM 2661 / JAL-1 / JCM 10045 / NBRC 100440</strain>
    </source>
</reference>
<reference key="3">
    <citation type="journal article" date="2004" name="J. Biol. Chem.">
        <title>Structure and subunit arrangement of the A-type ATP synthase complex from the archaeon Methanococcus jannaschii visualized by electron microscopy.</title>
        <authorList>
            <person name="Coskun U."/>
            <person name="Chaban Y.L."/>
            <person name="Lingl A."/>
            <person name="Mueller V."/>
            <person name="Keegstra W."/>
            <person name="Boekema E.J."/>
            <person name="Grueber G."/>
        </authorList>
    </citation>
    <scope>STRUCTURE BY ELECTRON MICROSCOPY (18 ANGSTROMS) OF A-TYPE ATP SYNTHASE</scope>
    <scope>SUBUNIT</scope>
    <scope>SUBCELLULAR LOCATION</scope>
    <scope>DOMAIN</scope>
    <source>
        <strain>ATCC 43067 / DSM 2661 / JAL-1 / JCM 10045 / NBRC 100440</strain>
    </source>
</reference>
<reference key="4">
    <citation type="journal article" date="2008" name="FEBS J.">
        <title>Identification of critical residues of subunit H in its interaction with subunit E of the A-ATP synthase from Methanocaldococcus jannaschii.</title>
        <authorList>
            <person name="Gayen S."/>
            <person name="Balakrishna A.M."/>
            <person name="Biukovic G."/>
            <person name="Yulei W."/>
            <person name="Hunke C."/>
            <person name="Grueber G."/>
        </authorList>
    </citation>
    <scope>SUBUNIT</scope>
    <scope>INTERACTION WITH SUBUNIT H</scope>
    <source>
        <strain>ATCC 43067 / DSM 2661 / JAL-1 / JCM 10045 / NBRC 100440</strain>
    </source>
</reference>
<reference evidence="10" key="5">
    <citation type="journal article" date="2009" name="J. Bioenerg. Biomembr.">
        <title>NMR solution structure of the N-terminal domain of subunit E (E1-52) of A1AO ATP synthase from Methanocaldococcus jannaschii.</title>
        <authorList>
            <person name="Gayen S."/>
            <person name="Balakrishna A.M."/>
            <person name="Gruber G."/>
        </authorList>
    </citation>
    <scope>STRUCTURE BY NMR OF 1-47</scope>
    <source>
        <strain>ATCC 43067 / DSM 2661 / JAL-1 / JCM 10045 / NBRC 100440</strain>
    </source>
</reference>
<reference evidence="11" key="6">
    <citation type="journal article" date="2010" name="J. Bioenerg. Biomembr.">
        <title>Crystal and solution structure of the C-terminal part of the Methanocaldococcus jannaschii A1AO ATP synthase subunit E revealed by X-ray diffraction and small-angle X-ray scattering.</title>
        <authorList>
            <person name="Balakrishna A.M."/>
            <person name="Manimekalai M.S."/>
            <person name="Hunke C."/>
            <person name="Gayen S."/>
            <person name="Rossle M."/>
            <person name="Jeyakanthan J."/>
            <person name="Gruber G."/>
        </authorList>
    </citation>
    <scope>X-RAY CRYSTALLOGRAPHY (4.10 ANGSTROMS) OF 98-203</scope>
    <scope>SUBUNIT</scope>
    <source>
        <strain>ATCC 43067 / DSM 2661 / JAL-1 / JCM 10045 / NBRC 100440</strain>
    </source>
</reference>
<gene>
    <name evidence="1 6" type="primary">atpE</name>
    <name type="ordered locus">MJ0220</name>
</gene>
<proteinExistence type="evidence at protein level"/>
<comment type="function">
    <text evidence="1 7">Component of the A-type ATP synthase that produces ATP from ADP in the presence of a proton gradient across the membrane.</text>
</comment>
<comment type="biophysicochemical properties">
    <phDependence>
        <text evidence="2">Optimum pH is 6.0 for ATP hydrolysis.</text>
    </phDependence>
    <temperatureDependence>
        <text evidence="2">Optimum temperature is 80 degrees Celsius.</text>
    </temperatureDependence>
</comment>
<comment type="subunit">
    <text evidence="2 3 4 9">Might form a homodimer (PubMed:20571891). Interacts with subunit H via residues 41-60 (PubMed:18336575). The A-type ATPase is composed of subunits A(3), B(3), C, D, E(1 or 2), F, H(2), I and K(x) (PubMed:12768457, PubMed:15220347).</text>
</comment>
<comment type="subcellular location">
    <subcellularLocation>
        <location evidence="1 2 3">Cell membrane</location>
        <topology evidence="1 2 3">Peripheral membrane protein</topology>
        <orientation evidence="7 8">Cytoplasmic side</orientation>
    </subcellularLocation>
</comment>
<comment type="domain">
    <text evidence="2 3">Purified ATP synthase is 25.9 nm long. The hydrophilic A1 domain is 9.4 X 11.5 nm, the central stalk is 8.0 X 3.9 nm and the membrane-bound A0 domain is 6.4 X 10.6 nm; the domains are connected by two stalks. ATP is synthesized or hydrolyzed by the A1 domain while ion translocation occurs via the A0 domain.</text>
</comment>
<comment type="similarity">
    <text evidence="1">Belongs to the V-ATPase E subunit family.</text>
</comment>
<comment type="sequence caution" evidence="2">
    <conflict type="erroneous initiation">
        <sequence resource="EMBL-CDS" id="AAB98203"/>
    </conflict>
    <text>Extended N-terminus.</text>
</comment>
<sequence>MGVDKIKSKILDDAKAEANKIISEAEAEKAKILEKAKEEAEKRKAEILKKGEKEAEMTKSRIISEAKLEAKKKLLEAKEEIIEMAINKLKEELVKLPEQPEYKDKLIKLIKDGAISLGGGELIVRLNKRDMELIDDSTLWNLEKEVENATKKVTVLKKGEPVDIAGGCIIETADGLKSLDNSLEAIFNRNLNVIRARITEKLF</sequence>
<feature type="initiator methionine" description="Removed" evidence="2">
    <location>
        <position position="1"/>
    </location>
</feature>
<feature type="chain" id="PRO_0000117316" description="A-type ATP synthase subunit E">
    <location>
        <begin position="2"/>
        <end position="203"/>
    </location>
</feature>
<feature type="helix" evidence="12">
    <location>
        <begin position="6"/>
        <end position="45"/>
    </location>
</feature>
<evidence type="ECO:0000255" key="1">
    <source>
        <dbReference type="HAMAP-Rule" id="MF_00311"/>
    </source>
</evidence>
<evidence type="ECO:0000269" key="2">
    <source>
    </source>
</evidence>
<evidence type="ECO:0000269" key="3">
    <source>
    </source>
</evidence>
<evidence type="ECO:0000269" key="4">
    <source>
    </source>
</evidence>
<evidence type="ECO:0000303" key="5">
    <source>
    </source>
</evidence>
<evidence type="ECO:0000303" key="6">
    <source>
    </source>
</evidence>
<evidence type="ECO:0000305" key="7">
    <source>
    </source>
</evidence>
<evidence type="ECO:0000305" key="8">
    <source>
    </source>
</evidence>
<evidence type="ECO:0000305" key="9">
    <source>
    </source>
</evidence>
<evidence type="ECO:0007744" key="10">
    <source>
        <dbReference type="PDB" id="2KK7"/>
    </source>
</evidence>
<evidence type="ECO:0007744" key="11">
    <source>
        <dbReference type="PDB" id="3LG8"/>
    </source>
</evidence>
<evidence type="ECO:0007829" key="12">
    <source>
        <dbReference type="PDB" id="2KK7"/>
    </source>
</evidence>
<name>AATE_METJA</name>
<accession>Q57673</accession>
<protein>
    <recommendedName>
        <fullName evidence="1">A-type ATP synthase subunit E</fullName>
    </recommendedName>
    <alternativeName>
        <fullName evidence="5">A1A0-type ATP synthase subunit E</fullName>
    </alternativeName>
</protein>
<keyword id="KW-0002">3D-structure</keyword>
<keyword id="KW-0066">ATP synthesis</keyword>
<keyword id="KW-1003">Cell membrane</keyword>
<keyword id="KW-0903">Direct protein sequencing</keyword>
<keyword id="KW-0375">Hydrogen ion transport</keyword>
<keyword id="KW-0406">Ion transport</keyword>
<keyword id="KW-0472">Membrane</keyword>
<keyword id="KW-1185">Reference proteome</keyword>
<keyword id="KW-0813">Transport</keyword>
<dbReference type="EMBL" id="L77117">
    <property type="protein sequence ID" value="AAB98203.1"/>
    <property type="status" value="ALT_INIT"/>
    <property type="molecule type" value="Genomic_DNA"/>
</dbReference>
<dbReference type="PIR" id="E64327">
    <property type="entry name" value="E64327"/>
</dbReference>
<dbReference type="RefSeq" id="WP_064496425.1">
    <property type="nucleotide sequence ID" value="NC_000909.1"/>
</dbReference>
<dbReference type="PDB" id="2KK7">
    <property type="method" value="NMR"/>
    <property type="chains" value="A=1-47"/>
</dbReference>
<dbReference type="PDB" id="3LG8">
    <property type="method" value="X-ray"/>
    <property type="resolution" value="4.10 A"/>
    <property type="chains" value="A/B=98-203"/>
</dbReference>
<dbReference type="PDBsum" id="2KK7"/>
<dbReference type="PDBsum" id="3LG8"/>
<dbReference type="BMRB" id="Q57673"/>
<dbReference type="SMR" id="Q57673"/>
<dbReference type="FunCoup" id="Q57673">
    <property type="interactions" value="17"/>
</dbReference>
<dbReference type="STRING" id="243232.MJ_0220"/>
<dbReference type="PaxDb" id="243232-MJ_0220"/>
<dbReference type="EnsemblBacteria" id="AAB98203">
    <property type="protein sequence ID" value="AAB98203"/>
    <property type="gene ID" value="MJ_0220"/>
</dbReference>
<dbReference type="GeneID" id="1451070"/>
<dbReference type="KEGG" id="mja:MJ_0220"/>
<dbReference type="eggNOG" id="arCOG00869">
    <property type="taxonomic scope" value="Archaea"/>
</dbReference>
<dbReference type="HOGENOM" id="CLU_105846_1_0_2"/>
<dbReference type="InParanoid" id="Q57673"/>
<dbReference type="PhylomeDB" id="Q57673"/>
<dbReference type="EvolutionaryTrace" id="Q57673"/>
<dbReference type="Proteomes" id="UP000000805">
    <property type="component" value="Chromosome"/>
</dbReference>
<dbReference type="GO" id="GO:0005886">
    <property type="term" value="C:plasma membrane"/>
    <property type="evidence" value="ECO:0007669"/>
    <property type="project" value="UniProtKB-SubCell"/>
</dbReference>
<dbReference type="GO" id="GO:0033178">
    <property type="term" value="C:proton-transporting two-sector ATPase complex, catalytic domain"/>
    <property type="evidence" value="ECO:0007669"/>
    <property type="project" value="InterPro"/>
</dbReference>
<dbReference type="GO" id="GO:0005524">
    <property type="term" value="F:ATP binding"/>
    <property type="evidence" value="ECO:0007669"/>
    <property type="project" value="UniProtKB-UniRule"/>
</dbReference>
<dbReference type="GO" id="GO:0046933">
    <property type="term" value="F:proton-transporting ATP synthase activity, rotational mechanism"/>
    <property type="evidence" value="ECO:0007669"/>
    <property type="project" value="UniProtKB-UniRule"/>
</dbReference>
<dbReference type="GO" id="GO:0046961">
    <property type="term" value="F:proton-transporting ATPase activity, rotational mechanism"/>
    <property type="evidence" value="ECO:0000318"/>
    <property type="project" value="GO_Central"/>
</dbReference>
<dbReference type="GO" id="GO:0042777">
    <property type="term" value="P:proton motive force-driven plasma membrane ATP synthesis"/>
    <property type="evidence" value="ECO:0007669"/>
    <property type="project" value="UniProtKB-UniRule"/>
</dbReference>
<dbReference type="CDD" id="cd06503">
    <property type="entry name" value="ATP-synt_Fo_b"/>
    <property type="match status" value="1"/>
</dbReference>
<dbReference type="Gene3D" id="3.30.2320.30">
    <property type="entry name" value="ATP synthase, E subunit, C-terminal"/>
    <property type="match status" value="1"/>
</dbReference>
<dbReference type="Gene3D" id="1.20.5.620">
    <property type="entry name" value="F1F0 ATP synthase subunit B, membrane domain"/>
    <property type="match status" value="1"/>
</dbReference>
<dbReference type="HAMAP" id="MF_00311">
    <property type="entry name" value="ATP_synth_E_arch"/>
    <property type="match status" value="1"/>
</dbReference>
<dbReference type="InterPro" id="IPR028987">
    <property type="entry name" value="ATP_synth_B-like_membr_sf"/>
</dbReference>
<dbReference type="InterPro" id="IPR038495">
    <property type="entry name" value="ATPase_E_C"/>
</dbReference>
<dbReference type="InterPro" id="IPR002842">
    <property type="entry name" value="ATPase_V1_Esu"/>
</dbReference>
<dbReference type="PANTHER" id="PTHR45715">
    <property type="entry name" value="ATPASE H+-TRANSPORTING V1 SUBUNIT E1A-RELATED"/>
    <property type="match status" value="1"/>
</dbReference>
<dbReference type="Pfam" id="PF01991">
    <property type="entry name" value="vATP-synt_E"/>
    <property type="match status" value="1"/>
</dbReference>
<dbReference type="SUPFAM" id="SSF81573">
    <property type="entry name" value="F1F0 ATP synthase subunit B, membrane domain"/>
    <property type="match status" value="1"/>
</dbReference>
<dbReference type="SUPFAM" id="SSF160527">
    <property type="entry name" value="V-type ATPase subunit E-like"/>
    <property type="match status" value="1"/>
</dbReference>
<organism>
    <name type="scientific">Methanocaldococcus jannaschii (strain ATCC 43067 / DSM 2661 / JAL-1 / JCM 10045 / NBRC 100440)</name>
    <name type="common">Methanococcus jannaschii</name>
    <dbReference type="NCBI Taxonomy" id="243232"/>
    <lineage>
        <taxon>Archaea</taxon>
        <taxon>Methanobacteriati</taxon>
        <taxon>Methanobacteriota</taxon>
        <taxon>Methanomada group</taxon>
        <taxon>Methanococci</taxon>
        <taxon>Methanococcales</taxon>
        <taxon>Methanocaldococcaceae</taxon>
        <taxon>Methanocaldococcus</taxon>
    </lineage>
</organism>